<comment type="function">
    <text evidence="1">Forms a fork protection complex (FPC) with TOF1 and which is required for chromosome segregation during meiosis and DNA damage repair. FPC coordinates leading and lagging strand synthesis and moves with the replication fork. FPC stabilizes replication forks in a configuration that is recognized by replication checkpoint sensors (By similarity).</text>
</comment>
<comment type="subunit">
    <text evidence="1">Component of the fork protection complex (FPC) consisting of TOF1 and CSM3.</text>
</comment>
<comment type="subcellular location">
    <subcellularLocation>
        <location evidence="1">Nucleus</location>
    </subcellularLocation>
</comment>
<comment type="similarity">
    <text evidence="3">Belongs to the CSM3 family.</text>
</comment>
<proteinExistence type="inferred from homology"/>
<evidence type="ECO:0000250" key="1"/>
<evidence type="ECO:0000256" key="2">
    <source>
        <dbReference type="SAM" id="MobiDB-lite"/>
    </source>
</evidence>
<evidence type="ECO:0000305" key="3"/>
<name>CSM3_CHAGB</name>
<gene>
    <name type="primary">CSM3</name>
    <name type="ORF">CHGG_06699</name>
</gene>
<organism>
    <name type="scientific">Chaetomium globosum (strain ATCC 6205 / CBS 148.51 / DSM 1962 / NBRC 6347 / NRRL 1970)</name>
    <name type="common">Soil fungus</name>
    <dbReference type="NCBI Taxonomy" id="306901"/>
    <lineage>
        <taxon>Eukaryota</taxon>
        <taxon>Fungi</taxon>
        <taxon>Dikarya</taxon>
        <taxon>Ascomycota</taxon>
        <taxon>Pezizomycotina</taxon>
        <taxon>Sordariomycetes</taxon>
        <taxon>Sordariomycetidae</taxon>
        <taxon>Sordariales</taxon>
        <taxon>Chaetomiaceae</taxon>
        <taxon>Chaetomium</taxon>
    </lineage>
</organism>
<feature type="chain" id="PRO_0000301716" description="Chromosome segregation in meiosis protein 3">
    <location>
        <begin position="1"/>
        <end position="431"/>
    </location>
</feature>
<feature type="region of interest" description="Disordered" evidence="2">
    <location>
        <begin position="1"/>
        <end position="20"/>
    </location>
</feature>
<feature type="region of interest" description="Disordered" evidence="2">
    <location>
        <begin position="32"/>
        <end position="51"/>
    </location>
</feature>
<feature type="region of interest" description="Disordered" evidence="2">
    <location>
        <begin position="191"/>
        <end position="431"/>
    </location>
</feature>
<feature type="compositionally biased region" description="Low complexity" evidence="2">
    <location>
        <begin position="1"/>
        <end position="14"/>
    </location>
</feature>
<feature type="compositionally biased region" description="Basic and acidic residues" evidence="2">
    <location>
        <begin position="42"/>
        <end position="51"/>
    </location>
</feature>
<feature type="compositionally biased region" description="Polar residues" evidence="2">
    <location>
        <begin position="215"/>
        <end position="225"/>
    </location>
</feature>
<feature type="compositionally biased region" description="Polar residues" evidence="2">
    <location>
        <begin position="251"/>
        <end position="265"/>
    </location>
</feature>
<feature type="compositionally biased region" description="Acidic residues" evidence="2">
    <location>
        <begin position="325"/>
        <end position="342"/>
    </location>
</feature>
<feature type="compositionally biased region" description="Low complexity" evidence="2">
    <location>
        <begin position="381"/>
        <end position="392"/>
    </location>
</feature>
<feature type="compositionally biased region" description="Basic and acidic residues" evidence="2">
    <location>
        <begin position="400"/>
        <end position="416"/>
    </location>
</feature>
<feature type="compositionally biased region" description="Acidic residues" evidence="2">
    <location>
        <begin position="417"/>
        <end position="431"/>
    </location>
</feature>
<keyword id="KW-0131">Cell cycle</keyword>
<keyword id="KW-0227">DNA damage</keyword>
<keyword id="KW-0234">DNA repair</keyword>
<keyword id="KW-0236">DNA replication inhibitor</keyword>
<keyword id="KW-0469">Meiosis</keyword>
<keyword id="KW-0539">Nucleus</keyword>
<keyword id="KW-1185">Reference proteome</keyword>
<sequence length="431" mass="46066">MPSKTASKAADTASRGNTGNFVDDYLADWDDDPFRSVSPEPAKNDKDGEKKKDILGIDKELDLKKKPRAPRVKLDETRLLSDKGIPKLRKMAPRLKLKGKGHEFSDAARLLSFYQEWLDDLFPKATFLDALAMVEKTGHKTTMRSARQKWIDELKPRAAIEEDEEDNRIHRGAVGPQQPPKVASIFETTAKAAGERAKTPTTDDLFGDDLYNATPVRNTGSTAPPQQAGGDVPDDDDLDALMAEAEAEARAQTQRPGPAPSSGSIFGNGARAVAPTTTAGPDDDDLDALMAEAEAQSLPTRAAQPVVNGSIFGNGAKKQTTQVTGDEDDDLDALMAEAEAEAEAGVQKTAQPVDPKEVGSGNARAAEKTSNLDNDDDDLDALMAEAEAEAGVGAAGGSSGDKKTSAQTETGHRTDNFDDDEKAMDEMDGLW</sequence>
<dbReference type="EMBL" id="CH408031">
    <property type="protein sequence ID" value="EAQ90080.1"/>
    <property type="molecule type" value="Genomic_DNA"/>
</dbReference>
<dbReference type="RefSeq" id="XP_001222794.1">
    <property type="nucleotide sequence ID" value="XM_001222793.1"/>
</dbReference>
<dbReference type="SMR" id="Q2H3R6"/>
<dbReference type="STRING" id="306901.Q2H3R6"/>
<dbReference type="GeneID" id="4390866"/>
<dbReference type="VEuPathDB" id="FungiDB:CHGG_06699"/>
<dbReference type="eggNOG" id="KOG3004">
    <property type="taxonomic scope" value="Eukaryota"/>
</dbReference>
<dbReference type="HOGENOM" id="CLU_036204_1_0_1"/>
<dbReference type="InParanoid" id="Q2H3R6"/>
<dbReference type="OMA" id="RMDWINE"/>
<dbReference type="OrthoDB" id="437078at2759"/>
<dbReference type="Proteomes" id="UP000001056">
    <property type="component" value="Unassembled WGS sequence"/>
</dbReference>
<dbReference type="GO" id="GO:0031298">
    <property type="term" value="C:replication fork protection complex"/>
    <property type="evidence" value="ECO:0007669"/>
    <property type="project" value="TreeGrafter"/>
</dbReference>
<dbReference type="GO" id="GO:0003677">
    <property type="term" value="F:DNA binding"/>
    <property type="evidence" value="ECO:0007669"/>
    <property type="project" value="TreeGrafter"/>
</dbReference>
<dbReference type="GO" id="GO:0006281">
    <property type="term" value="P:DNA repair"/>
    <property type="evidence" value="ECO:0007669"/>
    <property type="project" value="UniProtKB-KW"/>
</dbReference>
<dbReference type="GO" id="GO:0000076">
    <property type="term" value="P:DNA replication checkpoint signaling"/>
    <property type="evidence" value="ECO:0007669"/>
    <property type="project" value="InterPro"/>
</dbReference>
<dbReference type="GO" id="GO:0051321">
    <property type="term" value="P:meiotic cell cycle"/>
    <property type="evidence" value="ECO:0007669"/>
    <property type="project" value="UniProtKB-KW"/>
</dbReference>
<dbReference type="GO" id="GO:0043111">
    <property type="term" value="P:replication fork arrest"/>
    <property type="evidence" value="ECO:0007669"/>
    <property type="project" value="TreeGrafter"/>
</dbReference>
<dbReference type="GO" id="GO:0031297">
    <property type="term" value="P:replication fork processing"/>
    <property type="evidence" value="ECO:0007669"/>
    <property type="project" value="InterPro"/>
</dbReference>
<dbReference type="InterPro" id="IPR012923">
    <property type="entry name" value="Csm3"/>
</dbReference>
<dbReference type="InterPro" id="IPR040038">
    <property type="entry name" value="TIPIN/Csm3/Swi3"/>
</dbReference>
<dbReference type="PANTHER" id="PTHR13220">
    <property type="entry name" value="TIMELESS INTERACTING-RELATED"/>
    <property type="match status" value="1"/>
</dbReference>
<dbReference type="PANTHER" id="PTHR13220:SF11">
    <property type="entry name" value="TIMELESS-INTERACTING PROTEIN"/>
    <property type="match status" value="1"/>
</dbReference>
<dbReference type="Pfam" id="PF07962">
    <property type="entry name" value="Swi3"/>
    <property type="match status" value="1"/>
</dbReference>
<protein>
    <recommendedName>
        <fullName>Chromosome segregation in meiosis protein 3</fullName>
    </recommendedName>
</protein>
<reference key="1">
    <citation type="journal article" date="2015" name="Genome Announc.">
        <title>Draft genome sequence of the cellulolytic fungus Chaetomium globosum.</title>
        <authorList>
            <person name="Cuomo C.A."/>
            <person name="Untereiner W.A."/>
            <person name="Ma L.-J."/>
            <person name="Grabherr M."/>
            <person name="Birren B.W."/>
        </authorList>
    </citation>
    <scope>NUCLEOTIDE SEQUENCE [LARGE SCALE GENOMIC DNA]</scope>
    <source>
        <strain>ATCC 6205 / CBS 148.51 / DSM 1962 / NBRC 6347 / NRRL 1970</strain>
    </source>
</reference>
<accession>Q2H3R6</accession>